<organism>
    <name type="scientific">Homo sapiens</name>
    <name type="common">Human</name>
    <dbReference type="NCBI Taxonomy" id="9606"/>
    <lineage>
        <taxon>Eukaryota</taxon>
        <taxon>Metazoa</taxon>
        <taxon>Chordata</taxon>
        <taxon>Craniata</taxon>
        <taxon>Vertebrata</taxon>
        <taxon>Euteleostomi</taxon>
        <taxon>Mammalia</taxon>
        <taxon>Eutheria</taxon>
        <taxon>Euarchontoglires</taxon>
        <taxon>Primates</taxon>
        <taxon>Haplorrhini</taxon>
        <taxon>Catarrhini</taxon>
        <taxon>Hominidae</taxon>
        <taxon>Homo</taxon>
    </lineage>
</organism>
<protein>
    <recommendedName>
        <fullName evidence="6">Dynein regulatory complex protein 12</fullName>
    </recommendedName>
    <alternativeName>
        <fullName>Coiled-coil domain-containing protein 153</fullName>
    </alternativeName>
    <alternativeName>
        <fullName evidence="7">Dynein regulatory complex subunit 12 homolog</fullName>
    </alternativeName>
</protein>
<dbReference type="EMBL" id="AP002956">
    <property type="status" value="NOT_ANNOTATED_CDS"/>
    <property type="molecule type" value="Genomic_DNA"/>
</dbReference>
<dbReference type="EMBL" id="BC101443">
    <property type="protein sequence ID" value="AAI01444.1"/>
    <property type="molecule type" value="mRNA"/>
</dbReference>
<dbReference type="EMBL" id="BC101444">
    <property type="protein sequence ID" value="AAI01445.1"/>
    <property type="molecule type" value="mRNA"/>
</dbReference>
<dbReference type="EMBL" id="BC101986">
    <property type="protein sequence ID" value="AAI01987.1"/>
    <property type="molecule type" value="mRNA"/>
</dbReference>
<dbReference type="CCDS" id="CCDS44753.1">
    <molecule id="Q494R4-1"/>
</dbReference>
<dbReference type="RefSeq" id="NP_001138490.1">
    <molecule id="Q494R4-1"/>
    <property type="nucleotide sequence ID" value="NM_001145018.3"/>
</dbReference>
<dbReference type="RefSeq" id="XP_011541072.1">
    <property type="nucleotide sequence ID" value="XM_011542770.2"/>
</dbReference>
<dbReference type="RefSeq" id="XP_016873069.1">
    <property type="nucleotide sequence ID" value="XM_017017580.1"/>
</dbReference>
<dbReference type="SMR" id="Q494R4"/>
<dbReference type="BioGRID" id="129477">
    <property type="interactions" value="20"/>
</dbReference>
<dbReference type="FunCoup" id="Q494R4">
    <property type="interactions" value="11"/>
</dbReference>
<dbReference type="IntAct" id="Q494R4">
    <property type="interactions" value="18"/>
</dbReference>
<dbReference type="STRING" id="9606.ENSP00000423567"/>
<dbReference type="iPTMnet" id="Q494R4"/>
<dbReference type="PhosphoSitePlus" id="Q494R4"/>
<dbReference type="BioMuta" id="CCDC153"/>
<dbReference type="DMDM" id="193806578"/>
<dbReference type="jPOST" id="Q494R4"/>
<dbReference type="MassIVE" id="Q494R4"/>
<dbReference type="PaxDb" id="9606-ENSP00000423567"/>
<dbReference type="PeptideAtlas" id="Q494R4"/>
<dbReference type="Pumba" id="Q494R4"/>
<dbReference type="Antibodypedia" id="47797">
    <property type="antibodies" value="105 antibodies from 22 providers"/>
</dbReference>
<dbReference type="DNASU" id="283152"/>
<dbReference type="Ensembl" id="ENST00000415318.2">
    <molecule id="Q494R4-1"/>
    <property type="protein sequence ID" value="ENSP00000445431.1"/>
    <property type="gene ID" value="ENSG00000248712.8"/>
</dbReference>
<dbReference type="Ensembl" id="ENST00000503566.7">
    <molecule id="Q494R4-1"/>
    <property type="protein sequence ID" value="ENSP00000423567.2"/>
    <property type="gene ID" value="ENSG00000248712.8"/>
</dbReference>
<dbReference type="GeneID" id="283152"/>
<dbReference type="KEGG" id="hsa:283152"/>
<dbReference type="MANE-Select" id="ENST00000503566.7">
    <property type="protein sequence ID" value="ENSP00000423567.2"/>
    <property type="RefSeq nucleotide sequence ID" value="NM_001145018.3"/>
    <property type="RefSeq protein sequence ID" value="NP_001138490.1"/>
</dbReference>
<dbReference type="UCSC" id="uc058ihx.1">
    <molecule id="Q494R4-1"/>
    <property type="organism name" value="human"/>
</dbReference>
<dbReference type="AGR" id="HGNC:27446"/>
<dbReference type="CTD" id="283152"/>
<dbReference type="DisGeNET" id="283152"/>
<dbReference type="GeneCards" id="DRC12"/>
<dbReference type="HGNC" id="HGNC:27446">
    <property type="gene designation" value="DRC12"/>
</dbReference>
<dbReference type="HPA" id="ENSG00000248712">
    <property type="expression patterns" value="Group enriched (choroid plexus, fallopian tube)"/>
</dbReference>
<dbReference type="neXtProt" id="NX_Q494R4"/>
<dbReference type="OpenTargets" id="ENSG00000248712"/>
<dbReference type="PharmGKB" id="PA162381639"/>
<dbReference type="VEuPathDB" id="HostDB:ENSG00000248712"/>
<dbReference type="eggNOG" id="ENOG502S1BN">
    <property type="taxonomic scope" value="Eukaryota"/>
</dbReference>
<dbReference type="GeneTree" id="ENSGT00390000016289"/>
<dbReference type="HOGENOM" id="CLU_088442_0_0_1"/>
<dbReference type="InParanoid" id="Q494R4"/>
<dbReference type="OMA" id="HAKYKEQ"/>
<dbReference type="OrthoDB" id="10264405at2759"/>
<dbReference type="PAN-GO" id="Q494R4">
    <property type="GO annotations" value="0 GO annotations based on evolutionary models"/>
</dbReference>
<dbReference type="PhylomeDB" id="Q494R4"/>
<dbReference type="TreeFam" id="TF343461"/>
<dbReference type="PathwayCommons" id="Q494R4"/>
<dbReference type="SignaLink" id="Q494R4"/>
<dbReference type="BioGRID-ORCS" id="283152">
    <property type="hits" value="10 hits in 1143 CRISPR screens"/>
</dbReference>
<dbReference type="ChiTaRS" id="CCDC153">
    <property type="organism name" value="human"/>
</dbReference>
<dbReference type="GenomeRNAi" id="283152"/>
<dbReference type="Pharos" id="Q494R4">
    <property type="development level" value="Tdark"/>
</dbReference>
<dbReference type="PRO" id="PR:Q494R4"/>
<dbReference type="Proteomes" id="UP000005640">
    <property type="component" value="Chromosome 11"/>
</dbReference>
<dbReference type="RNAct" id="Q494R4">
    <property type="molecule type" value="protein"/>
</dbReference>
<dbReference type="Bgee" id="ENSG00000248712">
    <property type="expression patterns" value="Expressed in right uterine tube and 105 other cell types or tissues"/>
</dbReference>
<dbReference type="GO" id="GO:0005737">
    <property type="term" value="C:cytoplasm"/>
    <property type="evidence" value="ECO:0007669"/>
    <property type="project" value="UniProtKB-KW"/>
</dbReference>
<dbReference type="GO" id="GO:0005856">
    <property type="term" value="C:cytoskeleton"/>
    <property type="evidence" value="ECO:0007669"/>
    <property type="project" value="UniProtKB-KW"/>
</dbReference>
<dbReference type="GO" id="GO:0031514">
    <property type="term" value="C:motile cilium"/>
    <property type="evidence" value="ECO:0007669"/>
    <property type="project" value="UniProtKB-KW"/>
</dbReference>
<dbReference type="GO" id="GO:0042802">
    <property type="term" value="F:identical protein binding"/>
    <property type="evidence" value="ECO:0000353"/>
    <property type="project" value="IntAct"/>
</dbReference>
<dbReference type="Gene3D" id="1.10.287.1490">
    <property type="match status" value="1"/>
</dbReference>
<dbReference type="InterPro" id="IPR033585">
    <property type="entry name" value="DRC12-like"/>
</dbReference>
<dbReference type="PANTHER" id="PTHR28656">
    <property type="entry name" value="COILED-COIL DOMAIN-CONTAINING PROTEIN 153"/>
    <property type="match status" value="1"/>
</dbReference>
<dbReference type="PANTHER" id="PTHR28656:SF1">
    <property type="entry name" value="COILED-COIL DOMAIN-CONTAINING PROTEIN 153"/>
    <property type="match status" value="1"/>
</dbReference>
<evidence type="ECO:0000250" key="1">
    <source>
        <dbReference type="UniProtKB" id="Q22RH5"/>
    </source>
</evidence>
<evidence type="ECO:0000255" key="2"/>
<evidence type="ECO:0000256" key="3">
    <source>
        <dbReference type="SAM" id="MobiDB-lite"/>
    </source>
</evidence>
<evidence type="ECO:0000269" key="4">
    <source>
    </source>
</evidence>
<evidence type="ECO:0000303" key="5">
    <source>
    </source>
</evidence>
<evidence type="ECO:0000305" key="6"/>
<evidence type="ECO:0000312" key="7">
    <source>
        <dbReference type="HGNC" id="HGNC:27446"/>
    </source>
</evidence>
<accession>Q494R4</accession>
<reference key="1">
    <citation type="journal article" date="2006" name="Nature">
        <title>Human chromosome 11 DNA sequence and analysis including novel gene identification.</title>
        <authorList>
            <person name="Taylor T.D."/>
            <person name="Noguchi H."/>
            <person name="Totoki Y."/>
            <person name="Toyoda A."/>
            <person name="Kuroki Y."/>
            <person name="Dewar K."/>
            <person name="Lloyd C."/>
            <person name="Itoh T."/>
            <person name="Takeda T."/>
            <person name="Kim D.-W."/>
            <person name="She X."/>
            <person name="Barlow K.F."/>
            <person name="Bloom T."/>
            <person name="Bruford E."/>
            <person name="Chang J.L."/>
            <person name="Cuomo C.A."/>
            <person name="Eichler E."/>
            <person name="FitzGerald M.G."/>
            <person name="Jaffe D.B."/>
            <person name="LaButti K."/>
            <person name="Nicol R."/>
            <person name="Park H.-S."/>
            <person name="Seaman C."/>
            <person name="Sougnez C."/>
            <person name="Yang X."/>
            <person name="Zimmer A.R."/>
            <person name="Zody M.C."/>
            <person name="Birren B.W."/>
            <person name="Nusbaum C."/>
            <person name="Fujiyama A."/>
            <person name="Hattori M."/>
            <person name="Rogers J."/>
            <person name="Lander E.S."/>
            <person name="Sakaki Y."/>
        </authorList>
    </citation>
    <scope>NUCLEOTIDE SEQUENCE [LARGE SCALE GENOMIC DNA]</scope>
</reference>
<reference key="2">
    <citation type="journal article" date="2004" name="Genome Res.">
        <title>The status, quality, and expansion of the NIH full-length cDNA project: the Mammalian Gene Collection (MGC).</title>
        <authorList>
            <consortium name="The MGC Project Team"/>
        </authorList>
    </citation>
    <scope>NUCLEOTIDE SEQUENCE [LARGE SCALE MRNA] (ISOFORM 2)</scope>
    <scope>VARIANT HIS-101</scope>
</reference>
<gene>
    <name evidence="7" type="primary">DRC12</name>
    <name type="synonym">CCDC153</name>
</gene>
<feature type="chain" id="PRO_0000342650" description="Dynein regulatory complex protein 12">
    <location>
        <begin position="1"/>
        <end position="210"/>
    </location>
</feature>
<feature type="region of interest" description="Disordered" evidence="3">
    <location>
        <begin position="1"/>
        <end position="23"/>
    </location>
</feature>
<feature type="region of interest" description="Disordered" evidence="3">
    <location>
        <begin position="188"/>
        <end position="210"/>
    </location>
</feature>
<feature type="coiled-coil region" evidence="2">
    <location>
        <begin position="49"/>
        <end position="161"/>
    </location>
</feature>
<feature type="compositionally biased region" description="Basic residues" evidence="3">
    <location>
        <begin position="7"/>
        <end position="20"/>
    </location>
</feature>
<feature type="splice variant" id="VSP_034518" description="In isoform 2." evidence="5">
    <location>
        <begin position="1"/>
        <end position="86"/>
    </location>
</feature>
<feature type="sequence variant" id="VAR_044322" description="In dbSNP:rs2301574." evidence="4">
    <original>R</original>
    <variation>H</variation>
    <location>
        <position position="101"/>
    </location>
</feature>
<comment type="function">
    <text evidence="1">Component of the nexin-dynein regulatory complex (N-DRC), a key regulator of ciliary/flagellar motility which maintains the alignment and integrity of the distal axoneme and regulates microtubule sliding in motile axonemes.</text>
</comment>
<comment type="subunit">
    <text evidence="1">Component of the nexin-dynein regulatory complex (N-DRC).</text>
</comment>
<comment type="interaction">
    <interactant intactId="EBI-10241443">
        <id>Q494R4</id>
    </interactant>
    <interactant intactId="EBI-1181367">
        <id>Q01850</id>
        <label>CDR2</label>
    </interactant>
    <organismsDiffer>false</organismsDiffer>
    <experiments>3</experiments>
</comment>
<comment type="interaction">
    <interactant intactId="EBI-10241443">
        <id>Q494R4</id>
    </interactant>
    <interactant intactId="EBI-10173632">
        <id>P35638-2</id>
        <label>DDIT3</label>
    </interactant>
    <organismsDiffer>false</organismsDiffer>
    <experiments>3</experiments>
</comment>
<comment type="interaction">
    <interactant intactId="EBI-10241443">
        <id>Q494R4</id>
    </interactant>
    <interactant intactId="EBI-465804">
        <id>Q96EV8</id>
        <label>DTNBP1</label>
    </interactant>
    <organismsDiffer>false</organismsDiffer>
    <experiments>3</experiments>
</comment>
<comment type="interaction">
    <interactant intactId="EBI-10241443">
        <id>Q494R4</id>
    </interactant>
    <interactant intactId="EBI-739467">
        <id>Q9H8Y8</id>
        <label>GORASP2</label>
    </interactant>
    <organismsDiffer>false</organismsDiffer>
    <experiments>4</experiments>
</comment>
<comment type="interaction">
    <interactant intactId="EBI-10241443">
        <id>Q494R4</id>
    </interactant>
    <interactant intactId="EBI-10172876">
        <id>Q7Z6G3-2</id>
        <label>NECAB2</label>
    </interactant>
    <organismsDiffer>false</organismsDiffer>
    <experiments>3</experiments>
</comment>
<comment type="interaction">
    <interactant intactId="EBI-10241443">
        <id>Q494R4</id>
    </interactant>
    <interactant intactId="EBI-347978">
        <id>P37198</id>
        <label>NUP62</label>
    </interactant>
    <organismsDiffer>false</organismsDiffer>
    <experiments>3</experiments>
</comment>
<comment type="interaction">
    <interactant intactId="EBI-11974185">
        <id>Q494R4-2</id>
    </interactant>
    <interactant intactId="EBI-745226">
        <id>Q13155</id>
        <label>AIMP2</label>
    </interactant>
    <organismsDiffer>false</organismsDiffer>
    <experiments>3</experiments>
</comment>
<comment type="interaction">
    <interactant intactId="EBI-11974185">
        <id>Q494R4-2</id>
    </interactant>
    <interactant intactId="EBI-10229433">
        <id>Q13515</id>
        <label>BFSP2</label>
    </interactant>
    <organismsDiffer>false</organismsDiffer>
    <experiments>3</experiments>
</comment>
<comment type="interaction">
    <interactant intactId="EBI-11974185">
        <id>Q494R4-2</id>
    </interactant>
    <interactant intactId="EBI-741214">
        <id>Q9UFG5</id>
        <label>C19orf25</label>
    </interactant>
    <organismsDiffer>false</organismsDiffer>
    <experiments>3</experiments>
</comment>
<comment type="interaction">
    <interactant intactId="EBI-11974185">
        <id>Q494R4-2</id>
    </interactant>
    <interactant intactId="EBI-1181367">
        <id>Q01850</id>
        <label>CDR2</label>
    </interactant>
    <organismsDiffer>false</organismsDiffer>
    <experiments>3</experiments>
</comment>
<comment type="interaction">
    <interactant intactId="EBI-11974185">
        <id>Q494R4-2</id>
    </interactant>
    <interactant intactId="EBI-11063830">
        <id>Q86X02</id>
        <label>CDR2L</label>
    </interactant>
    <organismsDiffer>false</organismsDiffer>
    <experiments>3</experiments>
</comment>
<comment type="interaction">
    <interactant intactId="EBI-11974185">
        <id>Q494R4-2</id>
    </interactant>
    <interactant intactId="EBI-11974185">
        <id>Q494R4-2</id>
        <label>DRC12</label>
    </interactant>
    <organismsDiffer>false</organismsDiffer>
    <experiments>5</experiments>
</comment>
<comment type="interaction">
    <interactant intactId="EBI-11974185">
        <id>Q494R4-2</id>
    </interactant>
    <interactant intactId="EBI-11986315">
        <id>Q9H5Z6-2</id>
        <label>FAM124B</label>
    </interactant>
    <organismsDiffer>false</organismsDiffer>
    <experiments>3</experiments>
</comment>
<comment type="interaction">
    <interactant intactId="EBI-11974185">
        <id>Q494R4-2</id>
    </interactant>
    <interactant intactId="EBI-744239">
        <id>Q14749</id>
        <label>GNMT</label>
    </interactant>
    <organismsDiffer>false</organismsDiffer>
    <experiments>3</experiments>
</comment>
<comment type="interaction">
    <interactant intactId="EBI-11974185">
        <id>Q494R4-2</id>
    </interactant>
    <interactant intactId="EBI-11978177">
        <id>Q96NT3-2</id>
        <label>GUCD1</label>
    </interactant>
    <organismsDiffer>false</organismsDiffer>
    <experiments>3</experiments>
</comment>
<comment type="interaction">
    <interactant intactId="EBI-11974185">
        <id>Q494R4-2</id>
    </interactant>
    <interactant intactId="EBI-714158">
        <id>Q13526</id>
        <label>PIN1</label>
    </interactant>
    <organismsDiffer>false</organismsDiffer>
    <experiments>3</experiments>
</comment>
<comment type="interaction">
    <interactant intactId="EBI-11974185">
        <id>Q494R4-2</id>
    </interactant>
    <interactant intactId="EBI-394753">
        <id>P52435</id>
        <label>POLR2J</label>
    </interactant>
    <organismsDiffer>false</organismsDiffer>
    <experiments>3</experiments>
</comment>
<comment type="interaction">
    <interactant intactId="EBI-11974185">
        <id>Q494R4-2</id>
    </interactant>
    <interactant intactId="EBI-359352">
        <id>P25786</id>
        <label>PSMA1</label>
    </interactant>
    <organismsDiffer>false</organismsDiffer>
    <experiments>3</experiments>
</comment>
<comment type="interaction">
    <interactant intactId="EBI-11974185">
        <id>Q494R4-2</id>
    </interactant>
    <interactant intactId="EBI-742688">
        <id>Q9NZD8</id>
        <label>SPG21</label>
    </interactant>
    <organismsDiffer>false</organismsDiffer>
    <experiments>3</experiments>
</comment>
<comment type="interaction">
    <interactant intactId="EBI-11974185">
        <id>Q494R4-2</id>
    </interactant>
    <interactant intactId="EBI-714206">
        <id>Q13190</id>
        <label>STX5</label>
    </interactant>
    <organismsDiffer>false</organismsDiffer>
    <experiments>3</experiments>
</comment>
<comment type="subcellular location">
    <subcellularLocation>
        <location evidence="1">Cytoplasm</location>
        <location evidence="1">Cytoskeleton</location>
        <location evidence="1">Flagellum axoneme</location>
    </subcellularLocation>
</comment>
<comment type="alternative products">
    <event type="alternative splicing"/>
    <isoform>
        <id>Q494R4-1</id>
        <name>1</name>
        <sequence type="displayed"/>
    </isoform>
    <isoform>
        <id>Q494R4-2</id>
        <name>2</name>
        <sequence type="described" ref="VSP_034518"/>
    </isoform>
</comment>
<comment type="similarity">
    <text evidence="6">Belongs to the DRC12 family.</text>
</comment>
<keyword id="KW-0025">Alternative splicing</keyword>
<keyword id="KW-0966">Cell projection</keyword>
<keyword id="KW-0969">Cilium</keyword>
<keyword id="KW-0175">Coiled coil</keyword>
<keyword id="KW-0963">Cytoplasm</keyword>
<keyword id="KW-0206">Cytoskeleton</keyword>
<keyword id="KW-0282">Flagellum</keyword>
<keyword id="KW-1185">Reference proteome</keyword>
<name>DRC12_HUMAN</name>
<sequence>MPPKNKEKGKKSGAQKKKKNWGADVVAESRHRLVVLEKELLRDHLALRRDEARRAKASEDQLRQRLQGVEAELEGARSEGKAIYAEMSRQCHALQEDMQTRSKQLEEEVKGLRGQLEACQREAAAAREEAEQALGERDQALAQLRAHMADMEAKYEEILHDSLDRLLAKLRAIKQQWDGAALRLHARHKEQQRQFGLTPPGSLRPPAPSL</sequence>
<proteinExistence type="evidence at protein level"/>